<comment type="function">
    <text>Core component of nucleosome. Nucleosomes wrap and compact DNA into chromatin, limiting DNA accessibility to the cellular machineries which require DNA as a template. Histones thereby play a central role in transcription regulation, DNA repair, DNA replication and chromosomal stability. DNA accessibility is regulated via a complex set of post-translational modifications of histones, also called histone code, and nucleosome remodeling.</text>
</comment>
<comment type="subunit">
    <text>The nucleosome is a histone octamer containing two molecules each of H2A, H2B, H3 and H4 assembled in one H3-H4 heterotetramer and two H2A-H2B heterodimers. The octamer wraps approximately 147 bp of DNA.</text>
</comment>
<comment type="subcellular location">
    <subcellularLocation>
        <location>Nucleus</location>
    </subcellularLocation>
    <subcellularLocation>
        <location>Chromosome</location>
    </subcellularLocation>
</comment>
<comment type="PTM">
    <text evidence="6 9">Phosphorylation at Ser-37 (H2BS36ph) by AMPK in response to stress promotes transcription (By similarity). Phosphorylated on Ser-15 (H2BS14ph) by STK4/MST1 during apoptosis; which facilitates apoptotic chromatin condensation. Also phosphorylated on Ser-15 in response to DNA double strand breaks (DSBs), and in correlation with somatic hypermutation and immunoglobulin class-switch recombination.</text>
</comment>
<comment type="PTM">
    <text evidence="11">Crotonylation (Kcr) is specifically present in male germ cells and marks testis-specific genes in post-meiotic cells, including X-linked genes that escape sex chromosome inactivation in haploid cells. Crotonylation marks active promoters and enhancers and confers resistance to transcriptional repressors. It is also associated with post-meiotically activated genes on autosomes.</text>
</comment>
<comment type="PTM">
    <text evidence="2">Lactylated in macrophages by EP300/P300 by using lactoyl-CoA directly derived from endogenous or exogenous lactate, leading to stimulates gene transcription.</text>
</comment>
<comment type="miscellaneous">
    <text>The mouse orthologous protein seems not to exist.</text>
</comment>
<comment type="similarity">
    <text evidence="17">Belongs to the histone H2B family.</text>
</comment>
<comment type="caution">
    <text evidence="17">Could be the product of a pseudogene. In contrast to other H2B histones, it does not contain the conserved residue in C-terminus that is the target of monoubiquitination.</text>
</comment>
<name>H2B2D_HUMAN</name>
<sequence length="164" mass="18018">MPEPAKFAPAPKKGSKKAVTKAQKKDGKKRKRSRKESYSIYVYKVLKRVHPDTGIWCKAMGIMNSFLNDIFERIAGEASRLAHYNKRSTITSRRSRRPCACCCPASWPSTPCPRAPRRSPSTPAPSESLPGPGARSLPPSLPPRVAGCFVSKGSFQGHLTPLVK</sequence>
<evidence type="ECO:0000250" key="1">
    <source>
        <dbReference type="UniProtKB" id="P23527"/>
    </source>
</evidence>
<evidence type="ECO:0000250" key="2">
    <source>
        <dbReference type="UniProtKB" id="P33778"/>
    </source>
</evidence>
<evidence type="ECO:0000250" key="3">
    <source>
        <dbReference type="UniProtKB" id="P58876"/>
    </source>
</evidence>
<evidence type="ECO:0000250" key="4">
    <source>
        <dbReference type="UniProtKB" id="P62807"/>
    </source>
</evidence>
<evidence type="ECO:0000250" key="5">
    <source>
        <dbReference type="UniProtKB" id="Q5QNW6"/>
    </source>
</evidence>
<evidence type="ECO:0000250" key="6">
    <source>
        <dbReference type="UniProtKB" id="Q64475"/>
    </source>
</evidence>
<evidence type="ECO:0000250" key="7">
    <source>
        <dbReference type="UniProtKB" id="Q96A08"/>
    </source>
</evidence>
<evidence type="ECO:0000256" key="8">
    <source>
        <dbReference type="SAM" id="MobiDB-lite"/>
    </source>
</evidence>
<evidence type="ECO:0000269" key="9">
    <source>
    </source>
</evidence>
<evidence type="ECO:0000269" key="10">
    <source>
    </source>
</evidence>
<evidence type="ECO:0000269" key="11">
    <source>
    </source>
</evidence>
<evidence type="ECO:0000269" key="12">
    <source>
    </source>
</evidence>
<evidence type="ECO:0000269" key="13">
    <source>
    </source>
</evidence>
<evidence type="ECO:0000269" key="14">
    <source>
    </source>
</evidence>
<evidence type="ECO:0000269" key="15">
    <source>
    </source>
</evidence>
<evidence type="ECO:0000269" key="16">
    <source>
    </source>
</evidence>
<evidence type="ECO:0000305" key="17"/>
<evidence type="ECO:0000312" key="18">
    <source>
        <dbReference type="HGNC" id="HGNC:20517"/>
    </source>
</evidence>
<dbReference type="EMBL" id="AY131978">
    <property type="status" value="NOT_ANNOTATED_CDS"/>
    <property type="molecule type" value="Genomic_DNA"/>
</dbReference>
<dbReference type="EMBL" id="AY648853">
    <property type="protein sequence ID" value="AAT68256.1"/>
    <property type="molecule type" value="Genomic_DNA"/>
</dbReference>
<dbReference type="EMDB" id="EMD-17159"/>
<dbReference type="EMDB" id="EMD-17162"/>
<dbReference type="SMR" id="Q6DRA6"/>
<dbReference type="FunCoup" id="Q6DRA6">
    <property type="interactions" value="110"/>
</dbReference>
<dbReference type="IntAct" id="Q6DRA6">
    <property type="interactions" value="1"/>
</dbReference>
<dbReference type="GlyGen" id="Q6DRA6">
    <property type="glycosylation" value="1 site"/>
</dbReference>
<dbReference type="iPTMnet" id="Q6DRA6"/>
<dbReference type="PhosphoSitePlus" id="Q6DRA6"/>
<dbReference type="SwissPalm" id="Q6DRA6"/>
<dbReference type="BioMuta" id="HGNC:20517"/>
<dbReference type="DMDM" id="74709219"/>
<dbReference type="jPOST" id="Q6DRA6"/>
<dbReference type="MassIVE" id="Q6DRA6"/>
<dbReference type="ProteomicsDB" id="66254"/>
<dbReference type="Pumba" id="Q6DRA6"/>
<dbReference type="AGR" id="HGNC:20517"/>
<dbReference type="GeneCards" id="H2BC19P"/>
<dbReference type="HGNC" id="HGNC:20517">
    <property type="gene designation" value="H2BC19P"/>
</dbReference>
<dbReference type="neXtProt" id="NX_Q6DRA6"/>
<dbReference type="InParanoid" id="Q6DRA6"/>
<dbReference type="PAN-GO" id="Q6DRA6">
    <property type="GO annotations" value="2 GO annotations based on evolutionary models"/>
</dbReference>
<dbReference type="PathwayCommons" id="Q6DRA6"/>
<dbReference type="SignaLink" id="Q6DRA6"/>
<dbReference type="Pharos" id="Q6DRA6">
    <property type="development level" value="Tdark"/>
</dbReference>
<dbReference type="Proteomes" id="UP000005640">
    <property type="component" value="Unplaced"/>
</dbReference>
<dbReference type="RNAct" id="Q6DRA6">
    <property type="molecule type" value="protein"/>
</dbReference>
<dbReference type="GO" id="GO:0000786">
    <property type="term" value="C:nucleosome"/>
    <property type="evidence" value="ECO:0007669"/>
    <property type="project" value="UniProtKB-KW"/>
</dbReference>
<dbReference type="GO" id="GO:0005634">
    <property type="term" value="C:nucleus"/>
    <property type="evidence" value="ECO:0007669"/>
    <property type="project" value="UniProtKB-SubCell"/>
</dbReference>
<dbReference type="GO" id="GO:0003677">
    <property type="term" value="F:DNA binding"/>
    <property type="evidence" value="ECO:0007669"/>
    <property type="project" value="UniProtKB-KW"/>
</dbReference>
<dbReference type="GO" id="GO:0046982">
    <property type="term" value="F:protein heterodimerization activity"/>
    <property type="evidence" value="ECO:0007669"/>
    <property type="project" value="InterPro"/>
</dbReference>
<dbReference type="GO" id="GO:0030527">
    <property type="term" value="F:structural constituent of chromatin"/>
    <property type="evidence" value="ECO:0007669"/>
    <property type="project" value="InterPro"/>
</dbReference>
<dbReference type="CDD" id="cd22910">
    <property type="entry name" value="HFD_H2B"/>
    <property type="match status" value="1"/>
</dbReference>
<dbReference type="FunFam" id="1.10.20.10:FF:000043">
    <property type="entry name" value="Histone H2B"/>
    <property type="match status" value="1"/>
</dbReference>
<dbReference type="Gene3D" id="1.10.20.10">
    <property type="entry name" value="Histone, subunit A"/>
    <property type="match status" value="1"/>
</dbReference>
<dbReference type="InterPro" id="IPR009072">
    <property type="entry name" value="Histone-fold"/>
</dbReference>
<dbReference type="InterPro" id="IPR007125">
    <property type="entry name" value="Histone_H2A/H2B/H3"/>
</dbReference>
<dbReference type="InterPro" id="IPR000558">
    <property type="entry name" value="Histone_H2B"/>
</dbReference>
<dbReference type="PANTHER" id="PTHR23428">
    <property type="entry name" value="HISTONE H2B"/>
    <property type="match status" value="1"/>
</dbReference>
<dbReference type="Pfam" id="PF00125">
    <property type="entry name" value="Histone"/>
    <property type="match status" value="1"/>
</dbReference>
<dbReference type="PRINTS" id="PR00621">
    <property type="entry name" value="HISTONEH2B"/>
</dbReference>
<dbReference type="SMART" id="SM00427">
    <property type="entry name" value="H2B"/>
    <property type="match status" value="1"/>
</dbReference>
<dbReference type="SUPFAM" id="SSF47113">
    <property type="entry name" value="Histone-fold"/>
    <property type="match status" value="1"/>
</dbReference>
<gene>
    <name evidence="18" type="primary">H2BC19P</name>
    <name evidence="18" type="synonym">HIST2H2BD</name>
</gene>
<proteinExistence type="uncertain"/>
<accession>Q6DRA6</accession>
<keyword id="KW-0007">Acetylation</keyword>
<keyword id="KW-0158">Chromosome</keyword>
<keyword id="KW-0238">DNA-binding</keyword>
<keyword id="KW-0379">Hydroxylation</keyword>
<keyword id="KW-1017">Isopeptide bond</keyword>
<keyword id="KW-0488">Methylation</keyword>
<keyword id="KW-0544">Nucleosome core</keyword>
<keyword id="KW-0539">Nucleus</keyword>
<keyword id="KW-0597">Phosphoprotein</keyword>
<keyword id="KW-1185">Reference proteome</keyword>
<keyword id="KW-0832">Ubl conjugation</keyword>
<reference key="1">
    <citation type="journal article" date="2002" name="Genomics">
        <title>The human and mouse replication-dependent histone genes.</title>
        <authorList>
            <person name="Marzluff W.F."/>
            <person name="Gongidi P."/>
            <person name="Woods K.R."/>
            <person name="Jin J."/>
            <person name="Maltais L.J."/>
        </authorList>
    </citation>
    <scope>NUCLEOTIDE SEQUENCE [GENOMIC DNA]</scope>
</reference>
<reference key="2">
    <citation type="journal article" date="2004" name="Gene">
        <title>Functional characterization of a human histone gene cluster duplication.</title>
        <authorList>
            <person name="Braastad C.D."/>
            <person name="Hovhannisyan H."/>
            <person name="van Wijnen A.J."/>
            <person name="Stein J.L."/>
            <person name="Stein G.S."/>
        </authorList>
    </citation>
    <scope>NUCLEOTIDE SEQUENCE [GENOMIC DNA]</scope>
</reference>
<reference key="3">
    <citation type="journal article" date="2003" name="Cell">
        <title>Apoptotic phosphorylation of histone H2B is mediated by mammalian sterile twenty kinase.</title>
        <authorList>
            <person name="Cheung W.L."/>
            <person name="Ajiro K."/>
            <person name="Samejima K."/>
            <person name="Kloc M."/>
            <person name="Cheung P."/>
            <person name="Mizzen C.A."/>
            <person name="Beeser A."/>
            <person name="Etkin L.D."/>
            <person name="Chernoff J."/>
            <person name="Earnshaw W.C."/>
            <person name="Allis C.D."/>
        </authorList>
    </citation>
    <scope>PHOSPHORYLATION AT SER-15</scope>
</reference>
<reference key="4">
    <citation type="journal article" date="2005" name="Mol. Cell. Biochem.">
        <title>Inhibition of core histones acetylation by carcinogenic nickel(II).</title>
        <authorList>
            <person name="Golebiowski F."/>
            <person name="Kasprzak K.S."/>
        </authorList>
    </citation>
    <scope>ACETYLATION AT LYS-6; LYS-13; LYS-16 AND LYS-21</scope>
</reference>
<reference key="5">
    <citation type="journal article" date="2011" name="Cell">
        <title>Identification of 67 histone marks and histone lysine crotonylation as a new type of histone modification.</title>
        <authorList>
            <person name="Tan M."/>
            <person name="Luo H."/>
            <person name="Lee S."/>
            <person name="Jin F."/>
            <person name="Yang J.S."/>
            <person name="Montellier E."/>
            <person name="Buchou T."/>
            <person name="Cheng Z."/>
            <person name="Rousseaux S."/>
            <person name="Rajagopal N."/>
            <person name="Lu Z."/>
            <person name="Ye Z."/>
            <person name="Zhu Q."/>
            <person name="Wysocka J."/>
            <person name="Ye Y."/>
            <person name="Khochbin S."/>
            <person name="Ren B."/>
            <person name="Zhao Y."/>
        </authorList>
    </citation>
    <scope>CROTONYLATION AT LYS-6; LYS-12; LYS-13; LYS-16; LYS-17; LYS-21; LYS-24 AND LYS-35</scope>
</reference>
<reference key="6">
    <citation type="journal article" date="2012" name="Mol. Cell. Proteomics">
        <title>Lysine succinylation and lysine malonylation in histones.</title>
        <authorList>
            <person name="Xie Z."/>
            <person name="Dai J."/>
            <person name="Dai L."/>
            <person name="Tan M."/>
            <person name="Cheng Z."/>
            <person name="Wu Y."/>
            <person name="Boeke J.D."/>
            <person name="Zhao Y."/>
        </authorList>
    </citation>
    <scope>SUCCINYLATION AT LYS-35</scope>
</reference>
<reference key="7">
    <citation type="journal article" date="2014" name="Nat. Chem. Biol.">
        <title>Lysine 2-hydroxyisobutyrylation is a widely distributed active histone mark.</title>
        <authorList>
            <person name="Dai L."/>
            <person name="Peng C."/>
            <person name="Montellier E."/>
            <person name="Lu Z."/>
            <person name="Chen Y."/>
            <person name="Ishii H."/>
            <person name="Debernardi A."/>
            <person name="Buchou T."/>
            <person name="Rousseaux S."/>
            <person name="Jin F."/>
            <person name="Sabari B.R."/>
            <person name="Deng Z."/>
            <person name="Allis C.D."/>
            <person name="Ren B."/>
            <person name="Khochbin S."/>
            <person name="Zhao Y."/>
        </authorList>
    </citation>
    <scope>HYDROXYBUTYRYLATION AT LYS-6; LYS-13; LYS-21; LYS-24; LYS-25; LYS-35; LYS-44; LYS-47; LYS-58 AND LYS-86</scope>
</reference>
<reference key="8">
    <citation type="journal article" date="2016" name="Mol. Cell">
        <title>Dynamic competing histone H4 K5K8 acetylation and butyrylation are hallmarks of highly active gene promoters.</title>
        <authorList>
            <person name="Goudarzi A."/>
            <person name="Zhang D."/>
            <person name="Huang H."/>
            <person name="Barral S."/>
            <person name="Kwon O.K."/>
            <person name="Qi S."/>
            <person name="Tang Z."/>
            <person name="Buchou T."/>
            <person name="Vitte A.L."/>
            <person name="He T."/>
            <person name="Cheng Z."/>
            <person name="Montellier E."/>
            <person name="Gaucher J."/>
            <person name="Curtet S."/>
            <person name="Debernardi A."/>
            <person name="Charbonnier G."/>
            <person name="Puthier D."/>
            <person name="Petosa C."/>
            <person name="Panne D."/>
            <person name="Rousseaux S."/>
            <person name="Roeder R.G."/>
            <person name="Zhao Y."/>
            <person name="Khochbin S."/>
        </authorList>
    </citation>
    <scope>BUTYRYLATION AT LYS-6 AND LYS-21</scope>
</reference>
<reference key="9">
    <citation type="journal article" date="2016" name="Mol. Cell">
        <title>Metabolic regulation of gene expression by histone lysine beta-hydroxybutyrylation.</title>
        <authorList>
            <person name="Xie Z."/>
            <person name="Zhang D."/>
            <person name="Chung D."/>
            <person name="Tang Z."/>
            <person name="Huang H."/>
            <person name="Dai L."/>
            <person name="Qi S."/>
            <person name="Li J."/>
            <person name="Colak G."/>
            <person name="Chen Y."/>
            <person name="Xia C."/>
            <person name="Peng C."/>
            <person name="Ruan H."/>
            <person name="Kirkey M."/>
            <person name="Wang D."/>
            <person name="Jensen L.M."/>
            <person name="Kwon O.K."/>
            <person name="Lee S."/>
            <person name="Pletcher S.D."/>
            <person name="Tan M."/>
            <person name="Lombard D.B."/>
            <person name="White K.P."/>
            <person name="Zhao H."/>
            <person name="Li J."/>
            <person name="Roeder R.G."/>
            <person name="Yang X."/>
            <person name="Zhao Y."/>
        </authorList>
    </citation>
    <scope>HYDROXYBUTYRYLATION AT LYS-6; LYS-12; LYS-17; LYS-21; LYS-35 AND LYS-86</scope>
</reference>
<reference key="10">
    <citation type="journal article" date="2019" name="Mol. Cell">
        <title>Glutarylation of histone H4 lysine 91 regulates chromatin dynamics.</title>
        <authorList>
            <person name="Bao X."/>
            <person name="Liu Z."/>
            <person name="Zhang W."/>
            <person name="Gladysz K."/>
            <person name="Fung Y.M.E."/>
            <person name="Tian G."/>
            <person name="Xiong Y."/>
            <person name="Wong J.W.H."/>
            <person name="Yuen K.W.Y."/>
            <person name="Li X.D."/>
        </authorList>
    </citation>
    <scope>GLUTARYLATION AT LYS-17; LYS-35; LYS-44 AND LYS-47</scope>
</reference>
<feature type="initiator methionine" description="Removed" evidence="1">
    <location>
        <position position="1"/>
    </location>
</feature>
<feature type="chain" id="PRO_0000244825" description="Putative histone H2B type 2-D">
    <location>
        <begin position="2"/>
        <end position="164"/>
    </location>
</feature>
<feature type="region of interest" description="Disordered" evidence="8">
    <location>
        <begin position="1"/>
        <end position="33"/>
    </location>
</feature>
<feature type="region of interest" description="Disordered" evidence="8">
    <location>
        <begin position="111"/>
        <end position="140"/>
    </location>
</feature>
<feature type="compositionally biased region" description="Low complexity" evidence="8">
    <location>
        <begin position="1"/>
        <end position="12"/>
    </location>
</feature>
<feature type="modified residue" description="N-acetylproline" evidence="1">
    <location>
        <position position="2"/>
    </location>
</feature>
<feature type="modified residue" description="N6-(2-hydroxyisobutyryl)lysine; alternate" evidence="13">
    <location>
        <position position="6"/>
    </location>
</feature>
<feature type="modified residue" description="N6-(beta-hydroxybutyryl)lysine; alternate" evidence="15">
    <location>
        <position position="6"/>
    </location>
</feature>
<feature type="modified residue" description="N6-acetyllysine; alternate" evidence="10">
    <location>
        <position position="6"/>
    </location>
</feature>
<feature type="modified residue" description="N6-butyryllysine; alternate" evidence="14">
    <location>
        <position position="6"/>
    </location>
</feature>
<feature type="modified residue" description="N6-crotonyllysine; alternate" evidence="11">
    <location>
        <position position="6"/>
    </location>
</feature>
<feature type="modified residue" description="N6-lactoyllysine; alternate" evidence="2">
    <location>
        <position position="6"/>
    </location>
</feature>
<feature type="modified residue" description="N6-(beta-hydroxybutyryl)lysine; alternate" evidence="15">
    <location>
        <position position="12"/>
    </location>
</feature>
<feature type="modified residue" description="N6-acetyllysine; alternate" evidence="4">
    <location>
        <position position="12"/>
    </location>
</feature>
<feature type="modified residue" description="N6-crotonyllysine; alternate" evidence="11">
    <location>
        <position position="12"/>
    </location>
</feature>
<feature type="modified residue" description="N6-lactoyllysine; alternate" evidence="2">
    <location>
        <position position="12"/>
    </location>
</feature>
<feature type="modified residue" description="N6-(2-hydroxyisobutyryl)lysine; alternate" evidence="13">
    <location>
        <position position="13"/>
    </location>
</feature>
<feature type="modified residue" description="N6-acetyllysine; alternate" evidence="10">
    <location>
        <position position="13"/>
    </location>
</feature>
<feature type="modified residue" description="N6-crotonyllysine; alternate" evidence="11">
    <location>
        <position position="13"/>
    </location>
</feature>
<feature type="modified residue" description="Phosphoserine; by STK4/MST1" evidence="9">
    <location>
        <position position="15"/>
    </location>
</feature>
<feature type="modified residue" description="N6-acetyllysine; alternate" evidence="10">
    <location>
        <position position="16"/>
    </location>
</feature>
<feature type="modified residue" description="N6-crotonyllysine; alternate" evidence="11">
    <location>
        <position position="16"/>
    </location>
</feature>
<feature type="modified residue" description="N6-lactoyllysine; alternate" evidence="2">
    <location>
        <position position="16"/>
    </location>
</feature>
<feature type="modified residue" description="N6-(beta-hydroxybutyryl)lysine; alternate" evidence="15">
    <location>
        <position position="17"/>
    </location>
</feature>
<feature type="modified residue" description="N6-acetyllysine; alternate" evidence="2">
    <location>
        <position position="17"/>
    </location>
</feature>
<feature type="modified residue" description="N6-crotonyllysine; alternate" evidence="11">
    <location>
        <position position="17"/>
    </location>
</feature>
<feature type="modified residue" description="N6-glutaryllysine; alternate" evidence="16">
    <location>
        <position position="17"/>
    </location>
</feature>
<feature type="modified residue" description="N6-lactoyllysine; alternate" evidence="2">
    <location>
        <position position="17"/>
    </location>
</feature>
<feature type="modified residue" description="N6-(2-hydroxyisobutyryl)lysine; alternate" evidence="13">
    <location>
        <position position="21"/>
    </location>
</feature>
<feature type="modified residue" description="N6-(beta-hydroxybutyryl)lysine; alternate" evidence="15">
    <location>
        <position position="21"/>
    </location>
</feature>
<feature type="modified residue" description="N6-acetyllysine; alternate" evidence="10">
    <location>
        <position position="21"/>
    </location>
</feature>
<feature type="modified residue" description="N6-butyryllysine; alternate" evidence="14">
    <location>
        <position position="21"/>
    </location>
</feature>
<feature type="modified residue" description="N6-crotonyllysine; alternate" evidence="11">
    <location>
        <position position="21"/>
    </location>
</feature>
<feature type="modified residue" description="N6-lactoyllysine; alternate" evidence="2">
    <location>
        <position position="21"/>
    </location>
</feature>
<feature type="modified residue" description="N6-(2-hydroxyisobutyryl)lysine; alternate" evidence="13">
    <location>
        <position position="24"/>
    </location>
</feature>
<feature type="modified residue" description="N6-acetyllysine; alternate" evidence="2">
    <location>
        <position position="24"/>
    </location>
</feature>
<feature type="modified residue" description="N6-crotonyllysine; alternate" evidence="11">
    <location>
        <position position="24"/>
    </location>
</feature>
<feature type="modified residue" description="N6-lactoyllysine; alternate" evidence="2">
    <location>
        <position position="24"/>
    </location>
</feature>
<feature type="modified residue" description="N6-(2-hydroxyisobutyryl)lysine" evidence="13">
    <location>
        <position position="25"/>
    </location>
</feature>
<feature type="modified residue" description="N6-(2-hydroxyisobutyryl)lysine; alternate" evidence="13">
    <location>
        <position position="35"/>
    </location>
</feature>
<feature type="modified residue" description="N6-(beta-hydroxybutyryl)lysine; alternate" evidence="15">
    <location>
        <position position="35"/>
    </location>
</feature>
<feature type="modified residue" description="N6-crotonyllysine; alternate" evidence="11">
    <location>
        <position position="35"/>
    </location>
</feature>
<feature type="modified residue" description="N6-glutaryllysine; alternate" evidence="16">
    <location>
        <position position="35"/>
    </location>
</feature>
<feature type="modified residue" description="N6-succinyllysine; alternate" evidence="12">
    <location>
        <position position="35"/>
    </location>
</feature>
<feature type="modified residue" description="Phosphoserine; by AMPK" evidence="6">
    <location>
        <position position="37"/>
    </location>
</feature>
<feature type="modified residue" description="N6-(2-hydroxyisobutyryl)lysine; alternate" evidence="13">
    <location>
        <position position="44"/>
    </location>
</feature>
<feature type="modified residue" description="N6-glutaryllysine; alternate" evidence="16">
    <location>
        <position position="44"/>
    </location>
</feature>
<feature type="modified residue" description="N6-lactoyllysine; alternate" evidence="2">
    <location>
        <position position="44"/>
    </location>
</feature>
<feature type="modified residue" description="N6-(2-hydroxyisobutyryl)lysine; alternate" evidence="13">
    <location>
        <position position="47"/>
    </location>
</feature>
<feature type="modified residue" description="N6-glutaryllysine; alternate" evidence="16">
    <location>
        <position position="47"/>
    </location>
</feature>
<feature type="modified residue" description="N6-methyllysine; alternate" evidence="4">
    <location>
        <position position="47"/>
    </location>
</feature>
<feature type="modified residue" description="N6,N6-dimethyllysine; alternate" evidence="4">
    <location>
        <position position="58"/>
    </location>
</feature>
<feature type="modified residue" description="N6-(2-hydroxyisobutyryl)lysine; alternate" evidence="13">
    <location>
        <position position="58"/>
    </location>
</feature>
<feature type="modified residue" description="Dimethylated arginine" evidence="7">
    <location>
        <position position="80"/>
    </location>
</feature>
<feature type="modified residue" description="N6,N6,N6-trimethyllysine; alternate" evidence="7">
    <location>
        <position position="86"/>
    </location>
</feature>
<feature type="modified residue" description="N6-(2-hydroxyisobutyryl)lysine; alternate" evidence="13">
    <location>
        <position position="86"/>
    </location>
</feature>
<feature type="modified residue" description="N6-(beta-hydroxybutyryl)lysine; alternate" evidence="15">
    <location>
        <position position="86"/>
    </location>
</feature>
<feature type="modified residue" description="N6-acetyllysine; alternate" evidence="7">
    <location>
        <position position="86"/>
    </location>
</feature>
<feature type="modified residue" description="N6-lactoyllysine; alternate" evidence="2">
    <location>
        <position position="86"/>
    </location>
</feature>
<feature type="modified residue" description="Omega-N-methylarginine" evidence="7">
    <location>
        <position position="87"/>
    </location>
</feature>
<feature type="modified residue" description="Omega-N-methylarginine" evidence="7">
    <location>
        <position position="93"/>
    </location>
</feature>
<feature type="cross-link" description="Glycyl lysine isopeptide (Lys-Gly) (interchain with G-Cter in SUMO2); alternate" evidence="3">
    <location>
        <position position="6"/>
    </location>
</feature>
<feature type="cross-link" description="Glycyl lysine isopeptide (Lys-Gly) (interchain with G-Cter in SUMO2); alternate" evidence="5">
    <location>
        <position position="21"/>
    </location>
</feature>
<feature type="cross-link" description="Glycyl lysine isopeptide (Lys-Gly) (interchain with G-Cter in ubiquitin); alternate" evidence="2">
    <location>
        <position position="35"/>
    </location>
</feature>
<organism>
    <name type="scientific">Homo sapiens</name>
    <name type="common">Human</name>
    <dbReference type="NCBI Taxonomy" id="9606"/>
    <lineage>
        <taxon>Eukaryota</taxon>
        <taxon>Metazoa</taxon>
        <taxon>Chordata</taxon>
        <taxon>Craniata</taxon>
        <taxon>Vertebrata</taxon>
        <taxon>Euteleostomi</taxon>
        <taxon>Mammalia</taxon>
        <taxon>Eutheria</taxon>
        <taxon>Euarchontoglires</taxon>
        <taxon>Primates</taxon>
        <taxon>Haplorrhini</taxon>
        <taxon>Catarrhini</taxon>
        <taxon>Hominidae</taxon>
        <taxon>Homo</taxon>
    </lineage>
</organism>
<protein>
    <recommendedName>
        <fullName>Putative histone H2B type 2-D</fullName>
    </recommendedName>
    <alternativeName>
        <fullName evidence="18">H2B-clustered histone 19 pseudogene</fullName>
    </alternativeName>
</protein>